<sequence>MKRTAFFISDGTGITAETLGQSLLAQFENITFTKLTRPYIDTAEKARAMVQQINNAAEKDGGRPIIFDTLVNQEIRDILAESNGFMIDIFSSFLAPLEHELMSRSSYSVGKSHSISHNTNYMERIEAVNFALDNDDGARTRYYDKADLILVGVSRCGKTPTCLYMAMQYGIRAANYPLTEDDMERLQLPSALKEYKDKLFGLTIDPDRLAAIRNERKPNSRYASFAQCEFEVREVENLFRRENINFINSTHFSVEEISAKILVEKGVERRLK</sequence>
<protein>
    <recommendedName>
        <fullName evidence="1">Putative phosphoenolpyruvate synthase regulatory protein</fullName>
        <shortName evidence="1">PEP synthase regulatory protein</shortName>
        <shortName evidence="1">PSRP</shortName>
        <ecNumber evidence="1">2.7.11.33</ecNumber>
        <ecNumber evidence="1">2.7.4.28</ecNumber>
    </recommendedName>
    <alternativeName>
        <fullName evidence="1">Pyruvate, water dikinase regulatory protein</fullName>
    </alternativeName>
</protein>
<proteinExistence type="inferred from homology"/>
<reference key="1">
    <citation type="journal article" date="2008" name="Proc. Natl. Acad. Sci. U.S.A.">
        <title>Nitrogen fixation island and rhizosphere competence traits in the genome of root-associated Pseudomonas stutzeri A1501.</title>
        <authorList>
            <person name="Yan Y."/>
            <person name="Yang J."/>
            <person name="Dou Y."/>
            <person name="Chen M."/>
            <person name="Ping S."/>
            <person name="Peng J."/>
            <person name="Lu W."/>
            <person name="Zhang W."/>
            <person name="Yao Z."/>
            <person name="Li H."/>
            <person name="Liu W."/>
            <person name="He S."/>
            <person name="Geng L."/>
            <person name="Zhang X."/>
            <person name="Yang F."/>
            <person name="Yu H."/>
            <person name="Zhan Y."/>
            <person name="Li D."/>
            <person name="Lin Z."/>
            <person name="Wang Y."/>
            <person name="Elmerich C."/>
            <person name="Lin M."/>
            <person name="Jin Q."/>
        </authorList>
    </citation>
    <scope>NUCLEOTIDE SEQUENCE [LARGE SCALE GENOMIC DNA]</scope>
    <source>
        <strain>A1501</strain>
    </source>
</reference>
<comment type="function">
    <text evidence="1">Bifunctional serine/threonine kinase and phosphorylase involved in the regulation of the phosphoenolpyruvate synthase (PEPS) by catalyzing its phosphorylation/dephosphorylation.</text>
</comment>
<comment type="catalytic activity">
    <reaction evidence="1">
        <text>[pyruvate, water dikinase] + ADP = [pyruvate, water dikinase]-phosphate + AMP + H(+)</text>
        <dbReference type="Rhea" id="RHEA:46020"/>
        <dbReference type="Rhea" id="RHEA-COMP:11425"/>
        <dbReference type="Rhea" id="RHEA-COMP:11426"/>
        <dbReference type="ChEBI" id="CHEBI:15378"/>
        <dbReference type="ChEBI" id="CHEBI:43176"/>
        <dbReference type="ChEBI" id="CHEBI:68546"/>
        <dbReference type="ChEBI" id="CHEBI:456215"/>
        <dbReference type="ChEBI" id="CHEBI:456216"/>
        <dbReference type="EC" id="2.7.11.33"/>
    </reaction>
</comment>
<comment type="catalytic activity">
    <reaction evidence="1">
        <text>[pyruvate, water dikinase]-phosphate + phosphate + H(+) = [pyruvate, water dikinase] + diphosphate</text>
        <dbReference type="Rhea" id="RHEA:48580"/>
        <dbReference type="Rhea" id="RHEA-COMP:11425"/>
        <dbReference type="Rhea" id="RHEA-COMP:11426"/>
        <dbReference type="ChEBI" id="CHEBI:15378"/>
        <dbReference type="ChEBI" id="CHEBI:33019"/>
        <dbReference type="ChEBI" id="CHEBI:43176"/>
        <dbReference type="ChEBI" id="CHEBI:43474"/>
        <dbReference type="ChEBI" id="CHEBI:68546"/>
        <dbReference type="EC" id="2.7.4.28"/>
    </reaction>
</comment>
<comment type="similarity">
    <text evidence="1">Belongs to the pyruvate, phosphate/water dikinase regulatory protein family. PSRP subfamily.</text>
</comment>
<name>PSRP_STUS1</name>
<gene>
    <name type="ordered locus">PST_2038</name>
</gene>
<evidence type="ECO:0000255" key="1">
    <source>
        <dbReference type="HAMAP-Rule" id="MF_01062"/>
    </source>
</evidence>
<feature type="chain" id="PRO_0000316718" description="Putative phosphoenolpyruvate synthase regulatory protein">
    <location>
        <begin position="1"/>
        <end position="272"/>
    </location>
</feature>
<feature type="binding site" evidence="1">
    <location>
        <begin position="152"/>
        <end position="159"/>
    </location>
    <ligand>
        <name>ADP</name>
        <dbReference type="ChEBI" id="CHEBI:456216"/>
    </ligand>
</feature>
<keyword id="KW-0418">Kinase</keyword>
<keyword id="KW-0547">Nucleotide-binding</keyword>
<keyword id="KW-1185">Reference proteome</keyword>
<keyword id="KW-0723">Serine/threonine-protein kinase</keyword>
<keyword id="KW-0808">Transferase</keyword>
<dbReference type="EC" id="2.7.11.33" evidence="1"/>
<dbReference type="EC" id="2.7.4.28" evidence="1"/>
<dbReference type="EMBL" id="CP000304">
    <property type="protein sequence ID" value="ABP79709.1"/>
    <property type="molecule type" value="Genomic_DNA"/>
</dbReference>
<dbReference type="RefSeq" id="WP_011913178.1">
    <property type="nucleotide sequence ID" value="NC_009434.1"/>
</dbReference>
<dbReference type="SMR" id="A4VL58"/>
<dbReference type="KEGG" id="psa:PST_2038"/>
<dbReference type="eggNOG" id="COG1806">
    <property type="taxonomic scope" value="Bacteria"/>
</dbReference>
<dbReference type="HOGENOM" id="CLU_046206_1_0_6"/>
<dbReference type="Proteomes" id="UP000000233">
    <property type="component" value="Chromosome"/>
</dbReference>
<dbReference type="GO" id="GO:0043531">
    <property type="term" value="F:ADP binding"/>
    <property type="evidence" value="ECO:0007669"/>
    <property type="project" value="UniProtKB-UniRule"/>
</dbReference>
<dbReference type="GO" id="GO:0005524">
    <property type="term" value="F:ATP binding"/>
    <property type="evidence" value="ECO:0007669"/>
    <property type="project" value="InterPro"/>
</dbReference>
<dbReference type="GO" id="GO:0016776">
    <property type="term" value="F:phosphotransferase activity, phosphate group as acceptor"/>
    <property type="evidence" value="ECO:0007669"/>
    <property type="project" value="UniProtKB-UniRule"/>
</dbReference>
<dbReference type="GO" id="GO:0004674">
    <property type="term" value="F:protein serine/threonine kinase activity"/>
    <property type="evidence" value="ECO:0007669"/>
    <property type="project" value="UniProtKB-UniRule"/>
</dbReference>
<dbReference type="HAMAP" id="MF_01062">
    <property type="entry name" value="PSRP"/>
    <property type="match status" value="1"/>
</dbReference>
<dbReference type="InterPro" id="IPR005177">
    <property type="entry name" value="Kinase-pyrophosphorylase"/>
</dbReference>
<dbReference type="InterPro" id="IPR026530">
    <property type="entry name" value="PSRP"/>
</dbReference>
<dbReference type="NCBIfam" id="NF003742">
    <property type="entry name" value="PRK05339.1"/>
    <property type="match status" value="1"/>
</dbReference>
<dbReference type="PANTHER" id="PTHR31756">
    <property type="entry name" value="PYRUVATE, PHOSPHATE DIKINASE REGULATORY PROTEIN 1, CHLOROPLASTIC"/>
    <property type="match status" value="1"/>
</dbReference>
<dbReference type="PANTHER" id="PTHR31756:SF3">
    <property type="entry name" value="PYRUVATE, PHOSPHATE DIKINASE REGULATORY PROTEIN 1, CHLOROPLASTIC"/>
    <property type="match status" value="1"/>
</dbReference>
<dbReference type="Pfam" id="PF03618">
    <property type="entry name" value="Kinase-PPPase"/>
    <property type="match status" value="1"/>
</dbReference>
<accession>A4VL58</accession>
<organism>
    <name type="scientific">Stutzerimonas stutzeri (strain A1501)</name>
    <name type="common">Pseudomonas stutzeri</name>
    <dbReference type="NCBI Taxonomy" id="379731"/>
    <lineage>
        <taxon>Bacteria</taxon>
        <taxon>Pseudomonadati</taxon>
        <taxon>Pseudomonadota</taxon>
        <taxon>Gammaproteobacteria</taxon>
        <taxon>Pseudomonadales</taxon>
        <taxon>Pseudomonadaceae</taxon>
        <taxon>Stutzerimonas</taxon>
    </lineage>
</organism>